<feature type="chain" id="PRO_0000376762" description="N-acetyldiaminopimelate deacetylase">
    <location>
        <begin position="1"/>
        <end position="384"/>
    </location>
</feature>
<feature type="active site" evidence="1">
    <location>
        <position position="74"/>
    </location>
</feature>
<feature type="active site" description="Proton acceptor" evidence="1">
    <location>
        <position position="133"/>
    </location>
</feature>
<dbReference type="EC" id="3.5.1.47" evidence="1"/>
<dbReference type="EMBL" id="AL935263">
    <property type="protein sequence ID" value="CCC79471.1"/>
    <property type="molecule type" value="Genomic_DNA"/>
</dbReference>
<dbReference type="RefSeq" id="WP_011101699.1">
    <property type="nucleotide sequence ID" value="NC_004567.2"/>
</dbReference>
<dbReference type="RefSeq" id="YP_004889985.1">
    <property type="nucleotide sequence ID" value="NC_004567.2"/>
</dbReference>
<dbReference type="SMR" id="Q88V24"/>
<dbReference type="STRING" id="220668.lp_2263"/>
<dbReference type="EnsemblBacteria" id="CCC79471">
    <property type="protein sequence ID" value="CCC79471"/>
    <property type="gene ID" value="lp_2263"/>
</dbReference>
<dbReference type="KEGG" id="lpl:lp_2263"/>
<dbReference type="PATRIC" id="fig|220668.9.peg.1914"/>
<dbReference type="eggNOG" id="COG1473">
    <property type="taxonomic scope" value="Bacteria"/>
</dbReference>
<dbReference type="HOGENOM" id="CLU_023257_0_1_9"/>
<dbReference type="OrthoDB" id="9776731at2"/>
<dbReference type="PhylomeDB" id="Q88V24"/>
<dbReference type="UniPathway" id="UPA00034">
    <property type="reaction ID" value="UER00024"/>
</dbReference>
<dbReference type="Proteomes" id="UP000000432">
    <property type="component" value="Chromosome"/>
</dbReference>
<dbReference type="GO" id="GO:0050118">
    <property type="term" value="F:N-acetyldiaminopimelate deacetylase activity"/>
    <property type="evidence" value="ECO:0007669"/>
    <property type="project" value="UniProtKB-UniRule"/>
</dbReference>
<dbReference type="GO" id="GO:0019877">
    <property type="term" value="P:diaminopimelate biosynthetic process"/>
    <property type="evidence" value="ECO:0007669"/>
    <property type="project" value="UniProtKB-UniRule"/>
</dbReference>
<dbReference type="GO" id="GO:0009089">
    <property type="term" value="P:lysine biosynthetic process via diaminopimelate"/>
    <property type="evidence" value="ECO:0007669"/>
    <property type="project" value="UniProtKB-UniRule"/>
</dbReference>
<dbReference type="CDD" id="cd05670">
    <property type="entry name" value="M20_Acy1_YkuR-like"/>
    <property type="match status" value="1"/>
</dbReference>
<dbReference type="FunFam" id="3.30.70.360:FF:000001">
    <property type="entry name" value="N-acetyldiaminopimelate deacetylase"/>
    <property type="match status" value="1"/>
</dbReference>
<dbReference type="Gene3D" id="3.30.70.360">
    <property type="match status" value="1"/>
</dbReference>
<dbReference type="Gene3D" id="3.40.630.10">
    <property type="entry name" value="Zn peptidases"/>
    <property type="match status" value="1"/>
</dbReference>
<dbReference type="HAMAP" id="MF_01692">
    <property type="entry name" value="DapEL"/>
    <property type="match status" value="1"/>
</dbReference>
<dbReference type="InterPro" id="IPR023905">
    <property type="entry name" value="AcetylDAP_deacetylase"/>
</dbReference>
<dbReference type="InterPro" id="IPR017439">
    <property type="entry name" value="Amidohydrolase"/>
</dbReference>
<dbReference type="InterPro" id="IPR036264">
    <property type="entry name" value="Bact_exopeptidase_dim_dom"/>
</dbReference>
<dbReference type="InterPro" id="IPR002933">
    <property type="entry name" value="Peptidase_M20"/>
</dbReference>
<dbReference type="InterPro" id="IPR011650">
    <property type="entry name" value="Peptidase_M20_dimer"/>
</dbReference>
<dbReference type="NCBIfam" id="TIGR01891">
    <property type="entry name" value="amidohydrolases"/>
    <property type="match status" value="1"/>
</dbReference>
<dbReference type="PANTHER" id="PTHR11014:SF98">
    <property type="entry name" value="N-ACETYLDIAMINOPIMELATE DEACETYLASE"/>
    <property type="match status" value="1"/>
</dbReference>
<dbReference type="PANTHER" id="PTHR11014">
    <property type="entry name" value="PEPTIDASE M20 FAMILY MEMBER"/>
    <property type="match status" value="1"/>
</dbReference>
<dbReference type="Pfam" id="PF07687">
    <property type="entry name" value="M20_dimer"/>
    <property type="match status" value="1"/>
</dbReference>
<dbReference type="Pfam" id="PF01546">
    <property type="entry name" value="Peptidase_M20"/>
    <property type="match status" value="1"/>
</dbReference>
<dbReference type="PIRSF" id="PIRSF005962">
    <property type="entry name" value="Pept_M20D_amidohydro"/>
    <property type="match status" value="1"/>
</dbReference>
<dbReference type="SUPFAM" id="SSF55031">
    <property type="entry name" value="Bacterial exopeptidase dimerisation domain"/>
    <property type="match status" value="1"/>
</dbReference>
<dbReference type="SUPFAM" id="SSF53187">
    <property type="entry name" value="Zn-dependent exopeptidases"/>
    <property type="match status" value="1"/>
</dbReference>
<comment type="function">
    <text evidence="1">Catalyzes the conversion of N-acetyl-diaminopimelate to diaminopimelate and acetate.</text>
</comment>
<comment type="catalytic activity">
    <reaction evidence="1">
        <text>N-acetyl-(2S,6S)-2,6-diaminopimelate + H2O = (2S,6S)-2,6-diaminopimelate + acetate</text>
        <dbReference type="Rhea" id="RHEA:20405"/>
        <dbReference type="ChEBI" id="CHEBI:15377"/>
        <dbReference type="ChEBI" id="CHEBI:30089"/>
        <dbReference type="ChEBI" id="CHEBI:57609"/>
        <dbReference type="ChEBI" id="CHEBI:58767"/>
        <dbReference type="EC" id="3.5.1.47"/>
    </reaction>
</comment>
<comment type="pathway">
    <text evidence="1">Amino-acid biosynthesis; L-lysine biosynthesis via DAP pathway; LL-2,6-diaminopimelate from (S)-tetrahydrodipicolinate (acetylase route): step 3/3.</text>
</comment>
<comment type="similarity">
    <text evidence="1">Belongs to the peptidase M20A family. N-acetyldiaminopimelate deacetylase subfamily.</text>
</comment>
<sequence length="384" mass="42125">MVLRETDLIPIYQHLHQIPEIGLQEHETQAYLLSIIGKMPQEWLTIKTIPTLDTAILVKVSGLKHDYRIGYRTDIDALPVTENTGLPFASTHPGVMHACGHDIHMSVALGILSYFAENRPATDMVFMFQPAEENASGGQRLYESGALDGDWMPDEIFAFHDNPNLPTGAIGCRMGTLFAGTCEIHAHLSGKSGHAAYPHQANDMVVAGAALVSQLQTIVARNVDPIQSGVVTLGHFTAGTIGNVIAGEAQIDGTIRALTQEMNMHIQRRVRTITEGIALAYDCNIDLKLNQGGYYPVENNDAITADFIKYMQEDDDVNFIETEPAMTGEDFGYLIHQIPGTMFWLGVDSPYSLHSENMVPHTAAIMSGVNAMTSFLTHRNALHK</sequence>
<accession>Q88V24</accession>
<accession>F9UQI2</accession>
<reference key="1">
    <citation type="journal article" date="2003" name="Proc. Natl. Acad. Sci. U.S.A.">
        <title>Complete genome sequence of Lactobacillus plantarum WCFS1.</title>
        <authorList>
            <person name="Kleerebezem M."/>
            <person name="Boekhorst J."/>
            <person name="van Kranenburg R."/>
            <person name="Molenaar D."/>
            <person name="Kuipers O.P."/>
            <person name="Leer R."/>
            <person name="Tarchini R."/>
            <person name="Peters S.A."/>
            <person name="Sandbrink H.M."/>
            <person name="Fiers M.W.E.J."/>
            <person name="Stiekema W."/>
            <person name="Klein Lankhorst R.M."/>
            <person name="Bron P.A."/>
            <person name="Hoffer S.M."/>
            <person name="Nierop Groot M.N."/>
            <person name="Kerkhoven R."/>
            <person name="De Vries M."/>
            <person name="Ursing B."/>
            <person name="De Vos W.M."/>
            <person name="Siezen R.J."/>
        </authorList>
    </citation>
    <scope>NUCLEOTIDE SEQUENCE [LARGE SCALE GENOMIC DNA]</scope>
    <source>
        <strain>ATCC BAA-793 / NCIMB 8826 / WCFS1</strain>
    </source>
</reference>
<reference key="2">
    <citation type="journal article" date="2012" name="J. Bacteriol.">
        <title>Complete resequencing and reannotation of the Lactobacillus plantarum WCFS1 genome.</title>
        <authorList>
            <person name="Siezen R.J."/>
            <person name="Francke C."/>
            <person name="Renckens B."/>
            <person name="Boekhorst J."/>
            <person name="Wels M."/>
            <person name="Kleerebezem M."/>
            <person name="van Hijum S.A."/>
        </authorList>
    </citation>
    <scope>NUCLEOTIDE SEQUENCE [LARGE SCALE GENOMIC DNA]</scope>
    <scope>GENOME REANNOTATION</scope>
    <source>
        <strain>ATCC BAA-793 / NCIMB 8826 / WCFS1</strain>
    </source>
</reference>
<name>DAPEL_LACPL</name>
<organism>
    <name type="scientific">Lactiplantibacillus plantarum (strain ATCC BAA-793 / NCIMB 8826 / WCFS1)</name>
    <name type="common">Lactobacillus plantarum</name>
    <dbReference type="NCBI Taxonomy" id="220668"/>
    <lineage>
        <taxon>Bacteria</taxon>
        <taxon>Bacillati</taxon>
        <taxon>Bacillota</taxon>
        <taxon>Bacilli</taxon>
        <taxon>Lactobacillales</taxon>
        <taxon>Lactobacillaceae</taxon>
        <taxon>Lactiplantibacillus</taxon>
    </lineage>
</organism>
<protein>
    <recommendedName>
        <fullName evidence="1">N-acetyldiaminopimelate deacetylase</fullName>
        <ecNumber evidence="1">3.5.1.47</ecNumber>
    </recommendedName>
</protein>
<keyword id="KW-0028">Amino-acid biosynthesis</keyword>
<keyword id="KW-0220">Diaminopimelate biosynthesis</keyword>
<keyword id="KW-0378">Hydrolase</keyword>
<keyword id="KW-0457">Lysine biosynthesis</keyword>
<keyword id="KW-1185">Reference proteome</keyword>
<proteinExistence type="inferred from homology"/>
<evidence type="ECO:0000255" key="1">
    <source>
        <dbReference type="HAMAP-Rule" id="MF_01692"/>
    </source>
</evidence>
<gene>
    <name type="ordered locus">lp_2263</name>
</gene>